<protein>
    <recommendedName>
        <fullName>Putative antiporter subunit mnhF2</fullName>
    </recommendedName>
    <alternativeName>
        <fullName>Mrp complex subunit F2</fullName>
    </alternativeName>
    <alternativeName>
        <fullName>Putative NADH-ubiquinone oxidoreductase subunit mnhF2</fullName>
    </alternativeName>
</protein>
<comment type="subunit">
    <text evidence="1">May form a heterooligomeric complex that consists of seven subunits: mnhA2, mnhB2, mnhC2, mnhD2, mnhE2, mnhF2 and mnhG2.</text>
</comment>
<comment type="subcellular location">
    <subcellularLocation>
        <location evidence="3">Cell membrane</location>
        <topology evidence="3">Multi-pass membrane protein</topology>
    </subcellularLocation>
</comment>
<comment type="similarity">
    <text evidence="3">Belongs to the CPA3 antiporters (TC 2.A.63) subunit F family.</text>
</comment>
<accession>Q7A723</accession>
<dbReference type="EMBL" id="BA000018">
    <property type="protein sequence ID" value="BAB41815.1"/>
    <property type="molecule type" value="Genomic_DNA"/>
</dbReference>
<dbReference type="PIR" id="D89832">
    <property type="entry name" value="D89832"/>
</dbReference>
<dbReference type="RefSeq" id="WP_000616642.1">
    <property type="nucleotide sequence ID" value="NC_002745.2"/>
</dbReference>
<dbReference type="SMR" id="Q7A723"/>
<dbReference type="EnsemblBacteria" id="BAB41815">
    <property type="protein sequence ID" value="BAB41815"/>
    <property type="gene ID" value="BAB41815"/>
</dbReference>
<dbReference type="KEGG" id="sau:SA0583"/>
<dbReference type="HOGENOM" id="CLU_125825_1_3_9"/>
<dbReference type="GO" id="GO:0005886">
    <property type="term" value="C:plasma membrane"/>
    <property type="evidence" value="ECO:0007669"/>
    <property type="project" value="UniProtKB-SubCell"/>
</dbReference>
<dbReference type="GO" id="GO:0015385">
    <property type="term" value="F:sodium:proton antiporter activity"/>
    <property type="evidence" value="ECO:0007669"/>
    <property type="project" value="TreeGrafter"/>
</dbReference>
<dbReference type="InterPro" id="IPR007208">
    <property type="entry name" value="MrpF/PhaF-like"/>
</dbReference>
<dbReference type="NCBIfam" id="NF009300">
    <property type="entry name" value="PRK12657.1"/>
    <property type="match status" value="1"/>
</dbReference>
<dbReference type="PANTHER" id="PTHR34702">
    <property type="entry name" value="NA(+)/H(+) ANTIPORTER SUBUNIT F1"/>
    <property type="match status" value="1"/>
</dbReference>
<dbReference type="PANTHER" id="PTHR34702:SF1">
    <property type="entry name" value="NA(+)_H(+) ANTIPORTER SUBUNIT F"/>
    <property type="match status" value="1"/>
</dbReference>
<dbReference type="Pfam" id="PF04066">
    <property type="entry name" value="MrpF_PhaF"/>
    <property type="match status" value="1"/>
</dbReference>
<dbReference type="PIRSF" id="PIRSF028784">
    <property type="entry name" value="MrpF"/>
    <property type="match status" value="1"/>
</dbReference>
<sequence length="100" mass="10730">MIQTITHIMIISSLIIFGIALIICLFRLIKGPTTADRVVTFDTTSAVVMSIVGVLSVLMGTVSFLDSIMLIAIISFVSSVSISRFIGGGHVFNGNNKRNL</sequence>
<keyword id="KW-0050">Antiport</keyword>
<keyword id="KW-1003">Cell membrane</keyword>
<keyword id="KW-0406">Ion transport</keyword>
<keyword id="KW-0472">Membrane</keyword>
<keyword id="KW-0812">Transmembrane</keyword>
<keyword id="KW-1133">Transmembrane helix</keyword>
<keyword id="KW-0813">Transport</keyword>
<proteinExistence type="inferred from homology"/>
<gene>
    <name type="primary">mnhF2</name>
    <name type="synonym">mrpF2</name>
    <name type="ordered locus">SA0583</name>
</gene>
<organism>
    <name type="scientific">Staphylococcus aureus (strain N315)</name>
    <dbReference type="NCBI Taxonomy" id="158879"/>
    <lineage>
        <taxon>Bacteria</taxon>
        <taxon>Bacillati</taxon>
        <taxon>Bacillota</taxon>
        <taxon>Bacilli</taxon>
        <taxon>Bacillales</taxon>
        <taxon>Staphylococcaceae</taxon>
        <taxon>Staphylococcus</taxon>
    </lineage>
</organism>
<evidence type="ECO:0000250" key="1"/>
<evidence type="ECO:0000255" key="2"/>
<evidence type="ECO:0000305" key="3"/>
<name>MNHF2_STAAN</name>
<reference key="1">
    <citation type="journal article" date="2001" name="Lancet">
        <title>Whole genome sequencing of meticillin-resistant Staphylococcus aureus.</title>
        <authorList>
            <person name="Kuroda M."/>
            <person name="Ohta T."/>
            <person name="Uchiyama I."/>
            <person name="Baba T."/>
            <person name="Yuzawa H."/>
            <person name="Kobayashi I."/>
            <person name="Cui L."/>
            <person name="Oguchi A."/>
            <person name="Aoki K."/>
            <person name="Nagai Y."/>
            <person name="Lian J.-Q."/>
            <person name="Ito T."/>
            <person name="Kanamori M."/>
            <person name="Matsumaru H."/>
            <person name="Maruyama A."/>
            <person name="Murakami H."/>
            <person name="Hosoyama A."/>
            <person name="Mizutani-Ui Y."/>
            <person name="Takahashi N.K."/>
            <person name="Sawano T."/>
            <person name="Inoue R."/>
            <person name="Kaito C."/>
            <person name="Sekimizu K."/>
            <person name="Hirakawa H."/>
            <person name="Kuhara S."/>
            <person name="Goto S."/>
            <person name="Yabuzaki J."/>
            <person name="Kanehisa M."/>
            <person name="Yamashita A."/>
            <person name="Oshima K."/>
            <person name="Furuya K."/>
            <person name="Yoshino C."/>
            <person name="Shiba T."/>
            <person name="Hattori M."/>
            <person name="Ogasawara N."/>
            <person name="Hayashi H."/>
            <person name="Hiramatsu K."/>
        </authorList>
    </citation>
    <scope>NUCLEOTIDE SEQUENCE [LARGE SCALE GENOMIC DNA]</scope>
    <source>
        <strain>N315</strain>
    </source>
</reference>
<feature type="chain" id="PRO_0000372200" description="Putative antiporter subunit mnhF2">
    <location>
        <begin position="1"/>
        <end position="100"/>
    </location>
</feature>
<feature type="transmembrane region" description="Helical" evidence="2">
    <location>
        <begin position="5"/>
        <end position="25"/>
    </location>
</feature>
<feature type="transmembrane region" description="Helical" evidence="2">
    <location>
        <begin position="38"/>
        <end position="60"/>
    </location>
</feature>
<feature type="transmembrane region" description="Helical" evidence="2">
    <location>
        <begin position="70"/>
        <end position="92"/>
    </location>
</feature>